<gene>
    <name evidence="1" type="primary">aspS</name>
    <name type="ordered locus">Memar_2151</name>
</gene>
<protein>
    <recommendedName>
        <fullName evidence="1">Aspartate--tRNA(Asp/Asn) ligase</fullName>
        <ecNumber evidence="1">6.1.1.23</ecNumber>
    </recommendedName>
    <alternativeName>
        <fullName evidence="1">Aspartyl-tRNA synthetase</fullName>
        <shortName evidence="1">AspRS</shortName>
    </alternativeName>
    <alternativeName>
        <fullName evidence="1">Non-discriminating aspartyl-tRNA synthetase</fullName>
        <shortName evidence="1">ND-AspRS</shortName>
    </alternativeName>
</protein>
<evidence type="ECO:0000255" key="1">
    <source>
        <dbReference type="HAMAP-Rule" id="MF_02075"/>
    </source>
</evidence>
<name>SYDND_METMJ</name>
<reference key="1">
    <citation type="journal article" date="2009" name="Stand. Genomic Sci.">
        <title>Complete genome sequence of Methanoculleus marisnigri Romesser et al. 1981 type strain JR1.</title>
        <authorList>
            <person name="Anderson I.J."/>
            <person name="Sieprawska-Lupa M."/>
            <person name="Lapidus A."/>
            <person name="Nolan M."/>
            <person name="Copeland A."/>
            <person name="Glavina Del Rio T."/>
            <person name="Tice H."/>
            <person name="Dalin E."/>
            <person name="Barry K."/>
            <person name="Saunders E."/>
            <person name="Han C."/>
            <person name="Brettin T."/>
            <person name="Detter J.C."/>
            <person name="Bruce D."/>
            <person name="Mikhailova N."/>
            <person name="Pitluck S."/>
            <person name="Hauser L."/>
            <person name="Land M."/>
            <person name="Lucas S."/>
            <person name="Richardson P."/>
            <person name="Whitman W.B."/>
            <person name="Kyrpides N.C."/>
        </authorList>
    </citation>
    <scope>NUCLEOTIDE SEQUENCE [LARGE SCALE GENOMIC DNA]</scope>
    <source>
        <strain>ATCC 35101 / DSM 1498 / JR1</strain>
    </source>
</reference>
<dbReference type="EC" id="6.1.1.23" evidence="1"/>
<dbReference type="EMBL" id="CP000562">
    <property type="protein sequence ID" value="ABN58074.1"/>
    <property type="molecule type" value="Genomic_DNA"/>
</dbReference>
<dbReference type="RefSeq" id="WP_011844983.1">
    <property type="nucleotide sequence ID" value="NC_009051.1"/>
</dbReference>
<dbReference type="SMR" id="A3CXH4"/>
<dbReference type="STRING" id="368407.Memar_2151"/>
<dbReference type="GeneID" id="4847362"/>
<dbReference type="GeneID" id="76730234"/>
<dbReference type="KEGG" id="mem:Memar_2151"/>
<dbReference type="eggNOG" id="arCOG00406">
    <property type="taxonomic scope" value="Archaea"/>
</dbReference>
<dbReference type="HOGENOM" id="CLU_004553_2_1_2"/>
<dbReference type="OrthoDB" id="5908at2157"/>
<dbReference type="Proteomes" id="UP000002146">
    <property type="component" value="Chromosome"/>
</dbReference>
<dbReference type="GO" id="GO:0017101">
    <property type="term" value="C:aminoacyl-tRNA synthetase multienzyme complex"/>
    <property type="evidence" value="ECO:0007669"/>
    <property type="project" value="TreeGrafter"/>
</dbReference>
<dbReference type="GO" id="GO:0005829">
    <property type="term" value="C:cytosol"/>
    <property type="evidence" value="ECO:0007669"/>
    <property type="project" value="TreeGrafter"/>
</dbReference>
<dbReference type="GO" id="GO:0004815">
    <property type="term" value="F:aspartate-tRNA ligase activity"/>
    <property type="evidence" value="ECO:0007669"/>
    <property type="project" value="UniProtKB-UniRule"/>
</dbReference>
<dbReference type="GO" id="GO:0050560">
    <property type="term" value="F:aspartate-tRNA(Asn) ligase activity"/>
    <property type="evidence" value="ECO:0007669"/>
    <property type="project" value="UniProtKB-EC"/>
</dbReference>
<dbReference type="GO" id="GO:0005524">
    <property type="term" value="F:ATP binding"/>
    <property type="evidence" value="ECO:0007669"/>
    <property type="project" value="UniProtKB-UniRule"/>
</dbReference>
<dbReference type="GO" id="GO:0000287">
    <property type="term" value="F:magnesium ion binding"/>
    <property type="evidence" value="ECO:0007669"/>
    <property type="project" value="UniProtKB-UniRule"/>
</dbReference>
<dbReference type="GO" id="GO:0003723">
    <property type="term" value="F:RNA binding"/>
    <property type="evidence" value="ECO:0007669"/>
    <property type="project" value="TreeGrafter"/>
</dbReference>
<dbReference type="GO" id="GO:0006422">
    <property type="term" value="P:aspartyl-tRNA aminoacylation"/>
    <property type="evidence" value="ECO:0007669"/>
    <property type="project" value="UniProtKB-UniRule"/>
</dbReference>
<dbReference type="CDD" id="cd00776">
    <property type="entry name" value="AsxRS_core"/>
    <property type="match status" value="1"/>
</dbReference>
<dbReference type="FunFam" id="3.30.930.10:FF:000038">
    <property type="entry name" value="Aspartate--tRNA ligase"/>
    <property type="match status" value="1"/>
</dbReference>
<dbReference type="Gene3D" id="3.30.930.10">
    <property type="entry name" value="Bira Bifunctional Protein, Domain 2"/>
    <property type="match status" value="1"/>
</dbReference>
<dbReference type="Gene3D" id="2.40.50.140">
    <property type="entry name" value="Nucleic acid-binding proteins"/>
    <property type="match status" value="1"/>
</dbReference>
<dbReference type="HAMAP" id="MF_02075">
    <property type="entry name" value="Asp_tRNA_synth_type2"/>
    <property type="match status" value="1"/>
</dbReference>
<dbReference type="InterPro" id="IPR004364">
    <property type="entry name" value="Aa-tRNA-synt_II"/>
</dbReference>
<dbReference type="InterPro" id="IPR006195">
    <property type="entry name" value="aa-tRNA-synth_II"/>
</dbReference>
<dbReference type="InterPro" id="IPR045864">
    <property type="entry name" value="aa-tRNA-synth_II/BPL/LPL"/>
</dbReference>
<dbReference type="InterPro" id="IPR004523">
    <property type="entry name" value="Asp-tRNA_synthase_2"/>
</dbReference>
<dbReference type="InterPro" id="IPR002312">
    <property type="entry name" value="Asp/Asn-tRNA-synth_IIb"/>
</dbReference>
<dbReference type="InterPro" id="IPR012340">
    <property type="entry name" value="NA-bd_OB-fold"/>
</dbReference>
<dbReference type="InterPro" id="IPR004365">
    <property type="entry name" value="NA-bd_OB_tRNA"/>
</dbReference>
<dbReference type="NCBIfam" id="TIGR00458">
    <property type="entry name" value="aspS_nondisc"/>
    <property type="match status" value="1"/>
</dbReference>
<dbReference type="NCBIfam" id="NF003483">
    <property type="entry name" value="PRK05159.1"/>
    <property type="match status" value="1"/>
</dbReference>
<dbReference type="PANTHER" id="PTHR43450:SF1">
    <property type="entry name" value="ASPARTATE--TRNA LIGASE, CYTOPLASMIC"/>
    <property type="match status" value="1"/>
</dbReference>
<dbReference type="PANTHER" id="PTHR43450">
    <property type="entry name" value="ASPARTYL-TRNA SYNTHETASE"/>
    <property type="match status" value="1"/>
</dbReference>
<dbReference type="Pfam" id="PF00152">
    <property type="entry name" value="tRNA-synt_2"/>
    <property type="match status" value="1"/>
</dbReference>
<dbReference type="Pfam" id="PF01336">
    <property type="entry name" value="tRNA_anti-codon"/>
    <property type="match status" value="1"/>
</dbReference>
<dbReference type="PRINTS" id="PR01042">
    <property type="entry name" value="TRNASYNTHASP"/>
</dbReference>
<dbReference type="SUPFAM" id="SSF55681">
    <property type="entry name" value="Class II aaRS and biotin synthetases"/>
    <property type="match status" value="1"/>
</dbReference>
<dbReference type="SUPFAM" id="SSF50249">
    <property type="entry name" value="Nucleic acid-binding proteins"/>
    <property type="match status" value="1"/>
</dbReference>
<dbReference type="PROSITE" id="PS50862">
    <property type="entry name" value="AA_TRNA_LIGASE_II"/>
    <property type="match status" value="1"/>
</dbReference>
<comment type="function">
    <text evidence="1">Aspartyl-tRNA synthetase with relaxed tRNA specificity since it is able to aspartylate not only its cognate tRNA(Asp) but also tRNA(Asn). Reaction proceeds in two steps: L-aspartate is first activated by ATP to form Asp-AMP and then transferred to the acceptor end of tRNA(Asp/Asn).</text>
</comment>
<comment type="catalytic activity">
    <reaction evidence="1">
        <text>tRNA(Asx) + L-aspartate + ATP = L-aspartyl-tRNA(Asx) + AMP + diphosphate</text>
        <dbReference type="Rhea" id="RHEA:18349"/>
        <dbReference type="Rhea" id="RHEA-COMP:9710"/>
        <dbReference type="Rhea" id="RHEA-COMP:9711"/>
        <dbReference type="ChEBI" id="CHEBI:29991"/>
        <dbReference type="ChEBI" id="CHEBI:30616"/>
        <dbReference type="ChEBI" id="CHEBI:33019"/>
        <dbReference type="ChEBI" id="CHEBI:78442"/>
        <dbReference type="ChEBI" id="CHEBI:78516"/>
        <dbReference type="ChEBI" id="CHEBI:456215"/>
        <dbReference type="EC" id="6.1.1.23"/>
    </reaction>
</comment>
<comment type="cofactor">
    <cofactor evidence="1">
        <name>Mg(2+)</name>
        <dbReference type="ChEBI" id="CHEBI:18420"/>
    </cofactor>
    <text evidence="1">Binds 3 Mg(2+) cations per subunit. The strongest magnesium site (Mg1) is bound to the beta- and gamma-phosphates of ATP and four water molecules complete its coordination sphere.</text>
</comment>
<comment type="subunit">
    <text evidence="1">Homodimer.</text>
</comment>
<comment type="subcellular location">
    <subcellularLocation>
        <location evidence="1">Cytoplasm</location>
    </subcellularLocation>
</comment>
<comment type="similarity">
    <text evidence="1">Belongs to the class-II aminoacyl-tRNA synthetase family. Type 2 subfamily.</text>
</comment>
<organism>
    <name type="scientific">Methanoculleus marisnigri (strain ATCC 35101 / DSM 1498 / JR1)</name>
    <dbReference type="NCBI Taxonomy" id="368407"/>
    <lineage>
        <taxon>Archaea</taxon>
        <taxon>Methanobacteriati</taxon>
        <taxon>Methanobacteriota</taxon>
        <taxon>Stenosarchaea group</taxon>
        <taxon>Methanomicrobia</taxon>
        <taxon>Methanomicrobiales</taxon>
        <taxon>Methanomicrobiaceae</taxon>
        <taxon>Methanoculleus</taxon>
    </lineage>
</organism>
<proteinExistence type="inferred from homology"/>
<keyword id="KW-0030">Aminoacyl-tRNA synthetase</keyword>
<keyword id="KW-0067">ATP-binding</keyword>
<keyword id="KW-0963">Cytoplasm</keyword>
<keyword id="KW-0436">Ligase</keyword>
<keyword id="KW-0460">Magnesium</keyword>
<keyword id="KW-0479">Metal-binding</keyword>
<keyword id="KW-0547">Nucleotide-binding</keyword>
<keyword id="KW-0648">Protein biosynthesis</keyword>
<accession>A3CXH4</accession>
<feature type="chain" id="PRO_1000006707" description="Aspartate--tRNA(Asp/Asn) ligase">
    <location>
        <begin position="1"/>
        <end position="429"/>
    </location>
</feature>
<feature type="region of interest" description="Aspartate" evidence="1">
    <location>
        <begin position="188"/>
        <end position="191"/>
    </location>
</feature>
<feature type="binding site" evidence="1">
    <location>
        <position position="166"/>
    </location>
    <ligand>
        <name>L-aspartate</name>
        <dbReference type="ChEBI" id="CHEBI:29991"/>
    </ligand>
</feature>
<feature type="binding site" evidence="1">
    <location>
        <begin position="210"/>
        <end position="212"/>
    </location>
    <ligand>
        <name>ATP</name>
        <dbReference type="ChEBI" id="CHEBI:30616"/>
    </ligand>
</feature>
<feature type="binding site" evidence="1">
    <location>
        <position position="210"/>
    </location>
    <ligand>
        <name>L-aspartate</name>
        <dbReference type="ChEBI" id="CHEBI:29991"/>
    </ligand>
</feature>
<feature type="binding site" evidence="1">
    <location>
        <begin position="218"/>
        <end position="220"/>
    </location>
    <ligand>
        <name>ATP</name>
        <dbReference type="ChEBI" id="CHEBI:30616"/>
    </ligand>
</feature>
<feature type="binding site" evidence="1">
    <location>
        <position position="352"/>
    </location>
    <ligand>
        <name>ATP</name>
        <dbReference type="ChEBI" id="CHEBI:30616"/>
    </ligand>
</feature>
<feature type="binding site" evidence="1">
    <location>
        <position position="352"/>
    </location>
    <ligand>
        <name>Mg(2+)</name>
        <dbReference type="ChEBI" id="CHEBI:18420"/>
        <label>2</label>
    </ligand>
</feature>
<feature type="binding site" evidence="1">
    <location>
        <position position="352"/>
    </location>
    <ligand>
        <name>Mg(2+)</name>
        <dbReference type="ChEBI" id="CHEBI:18420"/>
        <label>3</label>
    </ligand>
</feature>
<feature type="binding site" evidence="1">
    <location>
        <position position="355"/>
    </location>
    <ligand>
        <name>L-aspartate</name>
        <dbReference type="ChEBI" id="CHEBI:29991"/>
    </ligand>
</feature>
<feature type="binding site" evidence="1">
    <location>
        <position position="355"/>
    </location>
    <ligand>
        <name>Mg(2+)</name>
        <dbReference type="ChEBI" id="CHEBI:18420"/>
        <label>2</label>
    </ligand>
</feature>
<feature type="binding site" evidence="1">
    <location>
        <position position="359"/>
    </location>
    <ligand>
        <name>L-aspartate</name>
        <dbReference type="ChEBI" id="CHEBI:29991"/>
    </ligand>
</feature>
<feature type="binding site" evidence="1">
    <location>
        <begin position="400"/>
        <end position="403"/>
    </location>
    <ligand>
        <name>ATP</name>
        <dbReference type="ChEBI" id="CHEBI:30616"/>
    </ligand>
</feature>
<feature type="site" description="Important for tRNA non-discrimination" evidence="1">
    <location>
        <position position="81"/>
    </location>
</feature>
<sequence length="429" mass="48279">MRLPIRAVTPETESAEIVGWVHEVRDLGGLSFFLIRDRTGIIQVTIPKKKVPAEILDTARSVSRESVVRVRGTVKAIEKAPGGREIVPEELEIISTAESPLPLDVAEKVSAEMDTRLDSRFLDARKPRVRAIFFIRSAVTCAATAFLASRGCINIATPKIVAAATEGGTELFPIAYFEKEAFMNQSPQLYKQMMMAAGFEAVFEIGPIFRAEEHNTVRHLNEATSLDVEVSFADHNDVMELLEDLIVHVYDHVAKDCSEHLAELEIDLKVPSKPFPRIPYAEAIEIANKTIEEKLAFGDDLSPAAERAIGDTVGQHYFIVDWPTDIRPYYAMPYPDRPEFCKAFDLMHPRMELSSGAQRIHDHDLLVERISAKGLSPESFEFYLKPFRYGMPPHAGWGLGIERLVMTMLDLPNIREAVLFPRDRHRLMP</sequence>